<gene>
    <name evidence="1" type="primary">rsgA</name>
    <name type="ordered locus">CLD_2134</name>
</gene>
<accession>B1IIL4</accession>
<proteinExistence type="inferred from homology"/>
<organism>
    <name type="scientific">Clostridium botulinum (strain Okra / Type B1)</name>
    <dbReference type="NCBI Taxonomy" id="498213"/>
    <lineage>
        <taxon>Bacteria</taxon>
        <taxon>Bacillati</taxon>
        <taxon>Bacillota</taxon>
        <taxon>Clostridia</taxon>
        <taxon>Eubacteriales</taxon>
        <taxon>Clostridiaceae</taxon>
        <taxon>Clostridium</taxon>
    </lineage>
</organism>
<protein>
    <recommendedName>
        <fullName evidence="1">Small ribosomal subunit biogenesis GTPase RsgA</fullName>
        <ecNumber evidence="1">3.6.1.-</ecNumber>
    </recommendedName>
</protein>
<comment type="function">
    <text evidence="1">One of several proteins that assist in the late maturation steps of the functional core of the 30S ribosomal subunit. Helps release RbfA from mature subunits. May play a role in the assembly of ribosomal proteins into the subunit. Circularly permuted GTPase that catalyzes slow GTP hydrolysis, GTPase activity is stimulated by the 30S ribosomal subunit.</text>
</comment>
<comment type="cofactor">
    <cofactor evidence="1">
        <name>Zn(2+)</name>
        <dbReference type="ChEBI" id="CHEBI:29105"/>
    </cofactor>
    <text evidence="1">Binds 1 zinc ion per subunit.</text>
</comment>
<comment type="subunit">
    <text evidence="1">Monomer. Associates with 30S ribosomal subunit, binds 16S rRNA.</text>
</comment>
<comment type="subcellular location">
    <subcellularLocation>
        <location evidence="1">Cytoplasm</location>
    </subcellularLocation>
</comment>
<comment type="similarity">
    <text evidence="1">Belongs to the TRAFAC class YlqF/YawG GTPase family. RsgA subfamily.</text>
</comment>
<evidence type="ECO:0000255" key="1">
    <source>
        <dbReference type="HAMAP-Rule" id="MF_01820"/>
    </source>
</evidence>
<evidence type="ECO:0000255" key="2">
    <source>
        <dbReference type="PROSITE-ProRule" id="PRU01058"/>
    </source>
</evidence>
<sequence length="292" mass="33764">MKGTIIKGIGGFYYIKIDNSEEIIECKARGKFRHTELTPMIGDYVEISIDKNNKGAIEKIYERRSELFRPAVANVTQALVVFSFKNPDINIDLLNKFLLLCEYNNLKAIVCFNKMDLVNKEDYKDIISMIEQAGYDIIFLNAEKERNMDIIKKLIKDNVTVFCGPSGVGKSTMLNKIIGKETMITGNISEKLKRGKHTTRHSELIYVDEGLLVDTPGFSSLDINFMEKEDLLHCIPEFRDFIGECKFTGCLHHREPNCAVKKAVEEGHIHKNRYDFYIKTLEEFMNRRKKKW</sequence>
<name>RSGA_CLOBK</name>
<dbReference type="EC" id="3.6.1.-" evidence="1"/>
<dbReference type="EMBL" id="CP000939">
    <property type="protein sequence ID" value="ACA43777.1"/>
    <property type="molecule type" value="Genomic_DNA"/>
</dbReference>
<dbReference type="RefSeq" id="WP_003402164.1">
    <property type="nucleotide sequence ID" value="NC_010516.1"/>
</dbReference>
<dbReference type="SMR" id="B1IIL4"/>
<dbReference type="KEGG" id="cbb:CLD_2134"/>
<dbReference type="HOGENOM" id="CLU_033617_2_1_9"/>
<dbReference type="Proteomes" id="UP000008541">
    <property type="component" value="Chromosome"/>
</dbReference>
<dbReference type="GO" id="GO:0005737">
    <property type="term" value="C:cytoplasm"/>
    <property type="evidence" value="ECO:0007669"/>
    <property type="project" value="UniProtKB-SubCell"/>
</dbReference>
<dbReference type="GO" id="GO:0005525">
    <property type="term" value="F:GTP binding"/>
    <property type="evidence" value="ECO:0007669"/>
    <property type="project" value="UniProtKB-UniRule"/>
</dbReference>
<dbReference type="GO" id="GO:0003924">
    <property type="term" value="F:GTPase activity"/>
    <property type="evidence" value="ECO:0007669"/>
    <property type="project" value="UniProtKB-UniRule"/>
</dbReference>
<dbReference type="GO" id="GO:0046872">
    <property type="term" value="F:metal ion binding"/>
    <property type="evidence" value="ECO:0007669"/>
    <property type="project" value="UniProtKB-KW"/>
</dbReference>
<dbReference type="GO" id="GO:0019843">
    <property type="term" value="F:rRNA binding"/>
    <property type="evidence" value="ECO:0007669"/>
    <property type="project" value="UniProtKB-KW"/>
</dbReference>
<dbReference type="GO" id="GO:0042274">
    <property type="term" value="P:ribosomal small subunit biogenesis"/>
    <property type="evidence" value="ECO:0007669"/>
    <property type="project" value="UniProtKB-UniRule"/>
</dbReference>
<dbReference type="CDD" id="cd04466">
    <property type="entry name" value="S1_YloQ_GTPase"/>
    <property type="match status" value="1"/>
</dbReference>
<dbReference type="CDD" id="cd01854">
    <property type="entry name" value="YjeQ_EngC"/>
    <property type="match status" value="1"/>
</dbReference>
<dbReference type="Gene3D" id="2.40.50.140">
    <property type="entry name" value="Nucleic acid-binding proteins"/>
    <property type="match status" value="1"/>
</dbReference>
<dbReference type="Gene3D" id="3.40.50.300">
    <property type="entry name" value="P-loop containing nucleotide triphosphate hydrolases"/>
    <property type="match status" value="1"/>
</dbReference>
<dbReference type="Gene3D" id="1.10.40.50">
    <property type="entry name" value="Probable gtpase engc, domain 3"/>
    <property type="match status" value="1"/>
</dbReference>
<dbReference type="HAMAP" id="MF_01820">
    <property type="entry name" value="GTPase_RsgA"/>
    <property type="match status" value="1"/>
</dbReference>
<dbReference type="InterPro" id="IPR030378">
    <property type="entry name" value="G_CP_dom"/>
</dbReference>
<dbReference type="InterPro" id="IPR012340">
    <property type="entry name" value="NA-bd_OB-fold"/>
</dbReference>
<dbReference type="InterPro" id="IPR027417">
    <property type="entry name" value="P-loop_NTPase"/>
</dbReference>
<dbReference type="InterPro" id="IPR004881">
    <property type="entry name" value="Ribosome_biogen_GTPase_RsgA"/>
</dbReference>
<dbReference type="InterPro" id="IPR010914">
    <property type="entry name" value="RsgA_GTPase_dom"/>
</dbReference>
<dbReference type="InterPro" id="IPR031944">
    <property type="entry name" value="RsgA_N"/>
</dbReference>
<dbReference type="NCBIfam" id="TIGR00157">
    <property type="entry name" value="ribosome small subunit-dependent GTPase A"/>
    <property type="match status" value="1"/>
</dbReference>
<dbReference type="PANTHER" id="PTHR32120">
    <property type="entry name" value="SMALL RIBOSOMAL SUBUNIT BIOGENESIS GTPASE RSGA"/>
    <property type="match status" value="1"/>
</dbReference>
<dbReference type="PANTHER" id="PTHR32120:SF11">
    <property type="entry name" value="SMALL RIBOSOMAL SUBUNIT BIOGENESIS GTPASE RSGA 1, MITOCHONDRIAL-RELATED"/>
    <property type="match status" value="1"/>
</dbReference>
<dbReference type="Pfam" id="PF03193">
    <property type="entry name" value="RsgA_GTPase"/>
    <property type="match status" value="1"/>
</dbReference>
<dbReference type="Pfam" id="PF16745">
    <property type="entry name" value="RsgA_N"/>
    <property type="match status" value="1"/>
</dbReference>
<dbReference type="SUPFAM" id="SSF50249">
    <property type="entry name" value="Nucleic acid-binding proteins"/>
    <property type="match status" value="1"/>
</dbReference>
<dbReference type="SUPFAM" id="SSF52540">
    <property type="entry name" value="P-loop containing nucleoside triphosphate hydrolases"/>
    <property type="match status" value="1"/>
</dbReference>
<dbReference type="PROSITE" id="PS50936">
    <property type="entry name" value="ENGC_GTPASE"/>
    <property type="match status" value="1"/>
</dbReference>
<dbReference type="PROSITE" id="PS51721">
    <property type="entry name" value="G_CP"/>
    <property type="match status" value="1"/>
</dbReference>
<feature type="chain" id="PRO_1000188050" description="Small ribosomal subunit biogenesis GTPase RsgA">
    <location>
        <begin position="1"/>
        <end position="292"/>
    </location>
</feature>
<feature type="domain" description="CP-type G" evidence="2">
    <location>
        <begin position="64"/>
        <end position="221"/>
    </location>
</feature>
<feature type="binding site" evidence="1">
    <location>
        <begin position="113"/>
        <end position="116"/>
    </location>
    <ligand>
        <name>GTP</name>
        <dbReference type="ChEBI" id="CHEBI:37565"/>
    </ligand>
</feature>
<feature type="binding site" evidence="1">
    <location>
        <begin position="164"/>
        <end position="172"/>
    </location>
    <ligand>
        <name>GTP</name>
        <dbReference type="ChEBI" id="CHEBI:37565"/>
    </ligand>
</feature>
<feature type="binding site" evidence="1">
    <location>
        <position position="245"/>
    </location>
    <ligand>
        <name>Zn(2+)</name>
        <dbReference type="ChEBI" id="CHEBI:29105"/>
    </ligand>
</feature>
<feature type="binding site" evidence="1">
    <location>
        <position position="250"/>
    </location>
    <ligand>
        <name>Zn(2+)</name>
        <dbReference type="ChEBI" id="CHEBI:29105"/>
    </ligand>
</feature>
<feature type="binding site" evidence="1">
    <location>
        <position position="252"/>
    </location>
    <ligand>
        <name>Zn(2+)</name>
        <dbReference type="ChEBI" id="CHEBI:29105"/>
    </ligand>
</feature>
<feature type="binding site" evidence="1">
    <location>
        <position position="258"/>
    </location>
    <ligand>
        <name>Zn(2+)</name>
        <dbReference type="ChEBI" id="CHEBI:29105"/>
    </ligand>
</feature>
<reference key="1">
    <citation type="journal article" date="2007" name="PLoS ONE">
        <title>Analysis of the neurotoxin complex genes in Clostridium botulinum A1-A4 and B1 strains: BoNT/A3, /Ba4 and /B1 clusters are located within plasmids.</title>
        <authorList>
            <person name="Smith T.J."/>
            <person name="Hill K.K."/>
            <person name="Foley B.T."/>
            <person name="Detter J.C."/>
            <person name="Munk A.C."/>
            <person name="Bruce D.C."/>
            <person name="Doggett N.A."/>
            <person name="Smith L.A."/>
            <person name="Marks J.D."/>
            <person name="Xie G."/>
            <person name="Brettin T.S."/>
        </authorList>
    </citation>
    <scope>NUCLEOTIDE SEQUENCE [LARGE SCALE GENOMIC DNA]</scope>
    <source>
        <strain>Okra / Type B1</strain>
    </source>
</reference>
<keyword id="KW-0963">Cytoplasm</keyword>
<keyword id="KW-0342">GTP-binding</keyword>
<keyword id="KW-0378">Hydrolase</keyword>
<keyword id="KW-0479">Metal-binding</keyword>
<keyword id="KW-0547">Nucleotide-binding</keyword>
<keyword id="KW-0690">Ribosome biogenesis</keyword>
<keyword id="KW-0694">RNA-binding</keyword>
<keyword id="KW-0699">rRNA-binding</keyword>
<keyword id="KW-0862">Zinc</keyword>